<dbReference type="EMBL" id="BA000004">
    <property type="protein sequence ID" value="BAB06302.1"/>
    <property type="molecule type" value="Genomic_DNA"/>
</dbReference>
<dbReference type="PIR" id="G83972">
    <property type="entry name" value="G83972"/>
</dbReference>
<dbReference type="RefSeq" id="WP_010898734.1">
    <property type="nucleotide sequence ID" value="NC_002570.2"/>
</dbReference>
<dbReference type="SMR" id="Q9K9R2"/>
<dbReference type="STRING" id="272558.gene:10728481"/>
<dbReference type="GeneID" id="87598096"/>
<dbReference type="KEGG" id="bha:BH2583"/>
<dbReference type="eggNOG" id="COG0333">
    <property type="taxonomic scope" value="Bacteria"/>
</dbReference>
<dbReference type="HOGENOM" id="CLU_129084_1_3_9"/>
<dbReference type="OrthoDB" id="9812874at2"/>
<dbReference type="Proteomes" id="UP000001258">
    <property type="component" value="Chromosome"/>
</dbReference>
<dbReference type="GO" id="GO:0015934">
    <property type="term" value="C:large ribosomal subunit"/>
    <property type="evidence" value="ECO:0007669"/>
    <property type="project" value="InterPro"/>
</dbReference>
<dbReference type="GO" id="GO:0003735">
    <property type="term" value="F:structural constituent of ribosome"/>
    <property type="evidence" value="ECO:0007669"/>
    <property type="project" value="InterPro"/>
</dbReference>
<dbReference type="GO" id="GO:0006412">
    <property type="term" value="P:translation"/>
    <property type="evidence" value="ECO:0007669"/>
    <property type="project" value="UniProtKB-UniRule"/>
</dbReference>
<dbReference type="HAMAP" id="MF_00340">
    <property type="entry name" value="Ribosomal_bL32"/>
    <property type="match status" value="1"/>
</dbReference>
<dbReference type="InterPro" id="IPR002677">
    <property type="entry name" value="Ribosomal_bL32"/>
</dbReference>
<dbReference type="InterPro" id="IPR044957">
    <property type="entry name" value="Ribosomal_bL32_bact"/>
</dbReference>
<dbReference type="InterPro" id="IPR011332">
    <property type="entry name" value="Ribosomal_zn-bd"/>
</dbReference>
<dbReference type="NCBIfam" id="TIGR01031">
    <property type="entry name" value="rpmF_bact"/>
    <property type="match status" value="1"/>
</dbReference>
<dbReference type="PANTHER" id="PTHR35534">
    <property type="entry name" value="50S RIBOSOMAL PROTEIN L32"/>
    <property type="match status" value="1"/>
</dbReference>
<dbReference type="PANTHER" id="PTHR35534:SF2">
    <property type="entry name" value="LARGE RIBOSOMAL SUBUNIT PROTEIN BL32"/>
    <property type="match status" value="1"/>
</dbReference>
<dbReference type="Pfam" id="PF01783">
    <property type="entry name" value="Ribosomal_L32p"/>
    <property type="match status" value="1"/>
</dbReference>
<dbReference type="SUPFAM" id="SSF57829">
    <property type="entry name" value="Zn-binding ribosomal proteins"/>
    <property type="match status" value="1"/>
</dbReference>
<evidence type="ECO:0000250" key="1"/>
<evidence type="ECO:0000305" key="2"/>
<reference key="1">
    <citation type="journal article" date="2000" name="Nucleic Acids Res.">
        <title>Complete genome sequence of the alkaliphilic bacterium Bacillus halodurans and genomic sequence comparison with Bacillus subtilis.</title>
        <authorList>
            <person name="Takami H."/>
            <person name="Nakasone K."/>
            <person name="Takaki Y."/>
            <person name="Maeno G."/>
            <person name="Sasaki R."/>
            <person name="Masui N."/>
            <person name="Fuji F."/>
            <person name="Hirama C."/>
            <person name="Nakamura Y."/>
            <person name="Ogasawara N."/>
            <person name="Kuhara S."/>
            <person name="Horikoshi K."/>
        </authorList>
    </citation>
    <scope>NUCLEOTIDE SEQUENCE [LARGE SCALE GENOMIC DNA]</scope>
    <source>
        <strain>ATCC BAA-125 / DSM 18197 / FERM 7344 / JCM 9153 / C-125</strain>
    </source>
</reference>
<keyword id="KW-1185">Reference proteome</keyword>
<keyword id="KW-0687">Ribonucleoprotein</keyword>
<keyword id="KW-0689">Ribosomal protein</keyword>
<sequence>MAVPFRRTSKTRKRKRRTHYKLAVPGMVKCPECGEMKLAHRVCKECGSYKGQDVLSK</sequence>
<accession>Q9K9R2</accession>
<name>RL32_HALH5</name>
<protein>
    <recommendedName>
        <fullName evidence="2">Large ribosomal subunit protein bL32</fullName>
    </recommendedName>
    <alternativeName>
        <fullName>50S ribosomal protein L32</fullName>
    </alternativeName>
</protein>
<comment type="similarity">
    <text evidence="2">Belongs to the bacterial ribosomal protein bL32 family.</text>
</comment>
<proteinExistence type="inferred from homology"/>
<gene>
    <name type="primary">rpmF</name>
    <name type="ordered locus">BH2583</name>
</gene>
<organism>
    <name type="scientific">Halalkalibacterium halodurans (strain ATCC BAA-125 / DSM 18197 / FERM 7344 / JCM 9153 / C-125)</name>
    <name type="common">Bacillus halodurans</name>
    <dbReference type="NCBI Taxonomy" id="272558"/>
    <lineage>
        <taxon>Bacteria</taxon>
        <taxon>Bacillati</taxon>
        <taxon>Bacillota</taxon>
        <taxon>Bacilli</taxon>
        <taxon>Bacillales</taxon>
        <taxon>Bacillaceae</taxon>
        <taxon>Halalkalibacterium (ex Joshi et al. 2022)</taxon>
    </lineage>
</organism>
<feature type="initiator methionine" description="Removed" evidence="1">
    <location>
        <position position="1"/>
    </location>
</feature>
<feature type="chain" id="PRO_0000172304" description="Large ribosomal subunit protein bL32">
    <location>
        <begin position="2"/>
        <end position="57"/>
    </location>
</feature>